<comment type="function">
    <text evidence="1">Catalyzes oxygen-dependent 5-hydroxyuridine (ho5U) modification at position 34 in tRNAs.</text>
</comment>
<comment type="catalytic activity">
    <reaction evidence="1">
        <text>uridine(34) in tRNA + AH2 + O2 = 5-hydroxyuridine(34) in tRNA + A + H2O</text>
        <dbReference type="Rhea" id="RHEA:64224"/>
        <dbReference type="Rhea" id="RHEA-COMP:11727"/>
        <dbReference type="Rhea" id="RHEA-COMP:13381"/>
        <dbReference type="ChEBI" id="CHEBI:13193"/>
        <dbReference type="ChEBI" id="CHEBI:15377"/>
        <dbReference type="ChEBI" id="CHEBI:15379"/>
        <dbReference type="ChEBI" id="CHEBI:17499"/>
        <dbReference type="ChEBI" id="CHEBI:65315"/>
        <dbReference type="ChEBI" id="CHEBI:136877"/>
    </reaction>
</comment>
<comment type="similarity">
    <text evidence="1">Belongs to the TrhO family.</text>
</comment>
<protein>
    <recommendedName>
        <fullName evidence="1">tRNA uridine(34) hydroxylase</fullName>
        <ecNumber evidence="1">1.14.-.-</ecNumber>
    </recommendedName>
    <alternativeName>
        <fullName evidence="1">tRNA hydroxylation protein O</fullName>
    </alternativeName>
</protein>
<name>TRHO_CHLMU</name>
<evidence type="ECO:0000255" key="1">
    <source>
        <dbReference type="HAMAP-Rule" id="MF_00469"/>
    </source>
</evidence>
<proteinExistence type="inferred from homology"/>
<accession>Q9PJB6</accession>
<keyword id="KW-0560">Oxidoreductase</keyword>
<keyword id="KW-0819">tRNA processing</keyword>
<reference key="1">
    <citation type="journal article" date="2000" name="Nucleic Acids Res.">
        <title>Genome sequences of Chlamydia trachomatis MoPn and Chlamydia pneumoniae AR39.</title>
        <authorList>
            <person name="Read T.D."/>
            <person name="Brunham R.C."/>
            <person name="Shen C."/>
            <person name="Gill S.R."/>
            <person name="Heidelberg J.F."/>
            <person name="White O."/>
            <person name="Hickey E.K."/>
            <person name="Peterson J.D."/>
            <person name="Utterback T.R."/>
            <person name="Berry K.J."/>
            <person name="Bass S."/>
            <person name="Linher K.D."/>
            <person name="Weidman J.F."/>
            <person name="Khouri H.M."/>
            <person name="Craven B."/>
            <person name="Bowman C."/>
            <person name="Dodson R.J."/>
            <person name="Gwinn M.L."/>
            <person name="Nelson W.C."/>
            <person name="DeBoy R.T."/>
            <person name="Kolonay J.F."/>
            <person name="McClarty G."/>
            <person name="Salzberg S.L."/>
            <person name="Eisen J.A."/>
            <person name="Fraser C.M."/>
        </authorList>
    </citation>
    <scope>NUCLEOTIDE SEQUENCE [LARGE SCALE GENOMIC DNA]</scope>
    <source>
        <strain>MoPn / Nigg</strain>
    </source>
</reference>
<sequence length="328" mass="37783">MEKNYYALAYYYFGPVSNPHEEIALHKQLFKTMDVSCRIYISEEGINGQFSGYQPDAERYMAWLKQRPDFATVKFKIHHIKENVFPRVTVKYRKELVALGCSVDTSKQGKHISPEEWHEKLQENRCLVLDVRNNYEWKIGHFENAVLPDIETFREFPAYADRLAQEHAPETTPVMMYCTGGIRCELYSALLLEKGFKEVYQLDGGVIAYGLKMGTGKWKGKLFVFDDRMAVPINEADPNVSPISKCSLCDIESDTYYNCANTDCNNLFLCCESCITSQKGCCSEECSQAPRIRTFSAERGNKPFRRKHLCPTIEQTRCCLREKDNQPA</sequence>
<dbReference type="EC" id="1.14.-.-" evidence="1"/>
<dbReference type="EMBL" id="AE002160">
    <property type="protein sequence ID" value="AAF39708.1"/>
    <property type="molecule type" value="Genomic_DNA"/>
</dbReference>
<dbReference type="PIR" id="D81650">
    <property type="entry name" value="D81650"/>
</dbReference>
<dbReference type="RefSeq" id="WP_010231938.1">
    <property type="nucleotide sequence ID" value="NZ_CP063055.1"/>
</dbReference>
<dbReference type="SMR" id="Q9PJB6"/>
<dbReference type="GeneID" id="1246285"/>
<dbReference type="KEGG" id="cmu:TC_0916"/>
<dbReference type="eggNOG" id="COG1054">
    <property type="taxonomic scope" value="Bacteria"/>
</dbReference>
<dbReference type="HOGENOM" id="CLU_038878_1_0_0"/>
<dbReference type="OrthoDB" id="9778326at2"/>
<dbReference type="Proteomes" id="UP000000800">
    <property type="component" value="Chromosome"/>
</dbReference>
<dbReference type="GO" id="GO:0016705">
    <property type="term" value="F:oxidoreductase activity, acting on paired donors, with incorporation or reduction of molecular oxygen"/>
    <property type="evidence" value="ECO:0007669"/>
    <property type="project" value="UniProtKB-UniRule"/>
</dbReference>
<dbReference type="GO" id="GO:0006400">
    <property type="term" value="P:tRNA modification"/>
    <property type="evidence" value="ECO:0007669"/>
    <property type="project" value="UniProtKB-UniRule"/>
</dbReference>
<dbReference type="CDD" id="cd01518">
    <property type="entry name" value="RHOD_YceA"/>
    <property type="match status" value="1"/>
</dbReference>
<dbReference type="Gene3D" id="3.30.70.100">
    <property type="match status" value="1"/>
</dbReference>
<dbReference type="Gene3D" id="3.40.250.10">
    <property type="entry name" value="Rhodanese-like domain"/>
    <property type="match status" value="1"/>
</dbReference>
<dbReference type="HAMAP" id="MF_00469">
    <property type="entry name" value="TrhO"/>
    <property type="match status" value="1"/>
</dbReference>
<dbReference type="InterPro" id="IPR001763">
    <property type="entry name" value="Rhodanese-like_dom"/>
</dbReference>
<dbReference type="InterPro" id="IPR036873">
    <property type="entry name" value="Rhodanese-like_dom_sf"/>
</dbReference>
<dbReference type="InterPro" id="IPR022111">
    <property type="entry name" value="Rhodanese_C"/>
</dbReference>
<dbReference type="InterPro" id="IPR020936">
    <property type="entry name" value="TrhO"/>
</dbReference>
<dbReference type="InterPro" id="IPR040503">
    <property type="entry name" value="TRHO_N"/>
</dbReference>
<dbReference type="NCBIfam" id="NF001134">
    <property type="entry name" value="PRK00142.1-2"/>
    <property type="match status" value="1"/>
</dbReference>
<dbReference type="NCBIfam" id="NF001135">
    <property type="entry name" value="PRK00142.1-3"/>
    <property type="match status" value="1"/>
</dbReference>
<dbReference type="PANTHER" id="PTHR43268:SF3">
    <property type="entry name" value="RHODANESE-LIKE DOMAIN-CONTAINING PROTEIN 7-RELATED"/>
    <property type="match status" value="1"/>
</dbReference>
<dbReference type="PANTHER" id="PTHR43268">
    <property type="entry name" value="THIOSULFATE SULFURTRANSFERASE/RHODANESE-LIKE DOMAIN-CONTAINING PROTEIN 2"/>
    <property type="match status" value="1"/>
</dbReference>
<dbReference type="Pfam" id="PF00581">
    <property type="entry name" value="Rhodanese"/>
    <property type="match status" value="1"/>
</dbReference>
<dbReference type="Pfam" id="PF12368">
    <property type="entry name" value="Rhodanese_C"/>
    <property type="match status" value="1"/>
</dbReference>
<dbReference type="Pfam" id="PF17773">
    <property type="entry name" value="UPF0176_N"/>
    <property type="match status" value="1"/>
</dbReference>
<dbReference type="SMART" id="SM00450">
    <property type="entry name" value="RHOD"/>
    <property type="match status" value="1"/>
</dbReference>
<dbReference type="SUPFAM" id="SSF52821">
    <property type="entry name" value="Rhodanese/Cell cycle control phosphatase"/>
    <property type="match status" value="1"/>
</dbReference>
<dbReference type="PROSITE" id="PS50206">
    <property type="entry name" value="RHODANESE_3"/>
    <property type="match status" value="1"/>
</dbReference>
<organism>
    <name type="scientific">Chlamydia muridarum (strain MoPn / Nigg)</name>
    <dbReference type="NCBI Taxonomy" id="243161"/>
    <lineage>
        <taxon>Bacteria</taxon>
        <taxon>Pseudomonadati</taxon>
        <taxon>Chlamydiota</taxon>
        <taxon>Chlamydiia</taxon>
        <taxon>Chlamydiales</taxon>
        <taxon>Chlamydiaceae</taxon>
        <taxon>Chlamydia/Chlamydophila group</taxon>
        <taxon>Chlamydia</taxon>
    </lineage>
</organism>
<feature type="chain" id="PRO_0000161463" description="tRNA uridine(34) hydroxylase">
    <location>
        <begin position="1"/>
        <end position="328"/>
    </location>
</feature>
<feature type="domain" description="Rhodanese" evidence="1">
    <location>
        <begin position="122"/>
        <end position="218"/>
    </location>
</feature>
<feature type="active site" description="Cysteine persulfide intermediate" evidence="1">
    <location>
        <position position="178"/>
    </location>
</feature>
<gene>
    <name evidence="1" type="primary">trhO</name>
    <name type="ordered locus">TC_0916</name>
</gene>